<organismHost>
    <name type="scientific">Prunus armeniaca</name>
    <name type="common">Apricot</name>
    <name type="synonym">Armeniaca vulgaris</name>
    <dbReference type="NCBI Taxonomy" id="36596"/>
</organismHost>
<organismHost>
    <name type="scientific">Prunus cerasifera</name>
    <name type="common">cherry plum</name>
    <dbReference type="NCBI Taxonomy" id="36595"/>
</organismHost>
<organismHost>
    <name type="scientific">Prunus domestica</name>
    <name type="common">Garden plum</name>
    <dbReference type="NCBI Taxonomy" id="3758"/>
</organismHost>
<organismHost>
    <name type="scientific">Prunus glandulosa</name>
    <dbReference type="NCBI Taxonomy" id="105665"/>
</organismHost>
<organismHost>
    <name type="scientific">Prunus persica</name>
    <name type="common">Peach</name>
    <name type="synonym">Amygdalus persica</name>
    <dbReference type="NCBI Taxonomy" id="3760"/>
</organismHost>
<organismHost>
    <name type="scientific">Prunus salicina</name>
    <dbReference type="NCBI Taxonomy" id="88123"/>
</organismHost>
<organismHost>
    <name type="scientific">Prunus spinosa</name>
    <name type="common">Blackthorn</name>
    <name type="synonym">Prunus domestica var. spinosa</name>
    <dbReference type="NCBI Taxonomy" id="114937"/>
</organismHost>
<sequence>LNKLAIPNANVCGWMSVRDYKRQGCNLDLDDNIRVPFYVKDLPETLHEKIWQTVEAHKADAGFGRICSSSACKIAYTLQTDIHSIPRTVKILDALLEQERTKQAHFRSMTSQSCSSSNFSLSSITSAIRSKYAKDHTEENIGVLQMAKAQLLEFKNLNIDPSYPELVRNFGALECVHHQTKEGVSKALRLKGHWNKQLVTRDATLMLGVLGGGAWMIFSYLRDSFKEEVVHQGFNRRQRQKLKFRQARDNRMAREVYGDDSTMEDYFGSAYSKKGKSKGRTRGMGTKTRKFVNMYGYDPTDYNFVRFVDPLTGHTLDENPLMDINLVQEHFSQVRNDYLGDDKITMQHIMSNPGIVAYYIKDATQKALKVDLTPHNPLRVCDKTATIAGFPEREFELRQTGQPVLVEPNAIPQINEEGDEEVGHESKSLFRGLRDYNPIASSICHLTNASGTRQSEIYGLGFGGLIVTNQHLFKRNDGELTIRSHHGEFVVKDTKTLKLLPCKGRDIIIIRLPKDFPPFPRRLQFRTPTAEDRVCLIGSNFQTKSVSSTMSETSATYPVDNSHFWKHWISTKDGHCGLPIVSTRDGSILGLHSLANSTNTQNFYAAFPDNFETTYLANQDNDNWIKQWRYNPDEVCWGSLQLKRDVPQSPFTICKLLTDLDGEFVYNQAKTTHWLRDKLEGNLKAVGACPGQLVTKHVVKGKCTLFETYLLTHPEEREFFQPLMGAYQKSALNKDAYVKDLMKYSKSIVVGAVDCEQFERAVDVVISMLISKGFSECSYVTDPEEIFSALNMKAAVGALYSGKKRDYFKDTSELEKEEFVRASCKRLFMGKKGVWNGSLKAELRPKEKVEANKTRSFTAAPIDTLLGGKVCVDDFNNQFYSLNLHCPWSVGMTKFRGGWDKLLRALPDGWIYCDADGSQFDSSLSPYLINAVLNIRLAFMEEWDIGEQMLSNLYTEIVYTPIATPDGTIVKKFKGNNSGQPSTVVDNTLMVILAMTYSLLKLGYHPDTHECICRYFVNGDDLVLAVHPAYESIYDELQHHFSQLGLNYTFTTKTENKEDLWFMSHKGIMCEGMYIPKLEPERIVSILEWDRSSEPIHRLEAICASMVEAWGYKELLREIRKFYSWVLEQAPYNALSKDGKAPYIAETALKKLYTDTEASETEIERYLEAFYSNLTDEDESNVVVHQADEKEDDEEEVDAGRPLVTTTQQPIVTTTTQQTPITSTTLQATQAMFNPIFTPATTEPTTRTVPHTTTTTPPSFGVIGNEDTAPNASNAVVRTGRDRDVDAGSIGTFTVPRLKAMTSKLSLPKVKGKAIMNLNHLAFYSPAQVDLSNTRAPQSCFQTWYEGVRRDYDVTDDEMSIILNGLMVWCIENGTSPNINGMWVMMDGETQVEYPIKPLLDHAKPTFRQIMAHFSNVAEAYIEKRNYEKAYMPRYGIQRNLTDYSLARYAFDFYEMTSTTPVRAREAHIQMKAAALRNAQNRLFGLDGNVGTQEEDTERHTAGDVNRNMHNLLGMRGV</sequence>
<evidence type="ECO:0000250" key="1"/>
<evidence type="ECO:0000250" key="2">
    <source>
        <dbReference type="UniProtKB" id="P04517"/>
    </source>
</evidence>
<evidence type="ECO:0000250" key="3">
    <source>
        <dbReference type="UniProtKB" id="P09814"/>
    </source>
</evidence>
<evidence type="ECO:0000250" key="4">
    <source>
        <dbReference type="UniProtKB" id="P18247"/>
    </source>
</evidence>
<evidence type="ECO:0000250" key="5">
    <source>
        <dbReference type="UniProtKB" id="P21231"/>
    </source>
</evidence>
<evidence type="ECO:0000255" key="6"/>
<evidence type="ECO:0000255" key="7">
    <source>
        <dbReference type="PROSITE-ProRule" id="PRU00539"/>
    </source>
</evidence>
<evidence type="ECO:0000255" key="8">
    <source>
        <dbReference type="PROSITE-ProRule" id="PRU00766"/>
    </source>
</evidence>
<evidence type="ECO:0000256" key="9">
    <source>
        <dbReference type="SAM" id="MobiDB-lite"/>
    </source>
</evidence>
<evidence type="ECO:0000305" key="10"/>
<feature type="chain" id="PRO_0000040325" description="Cytoplasmic inclusion protein" evidence="1">
    <location>
        <begin position="1" status="less than"/>
        <end position="179"/>
    </location>
</feature>
<feature type="chain" id="PRO_0000420006" description="Genome polyprotein">
    <location>
        <begin position="1"/>
        <end position="1518"/>
    </location>
</feature>
<feature type="chain" id="PRO_0000040326" description="6 kDa protein 2" evidence="1">
    <location>
        <begin position="180"/>
        <end position="232"/>
    </location>
</feature>
<feature type="chain" id="PRO_0000040327" description="Viral genome-linked protein" evidence="1">
    <location>
        <begin position="233"/>
        <end position="425"/>
    </location>
</feature>
<feature type="chain" id="PRO_0000040328" description="Nuclear inclusion protein A" evidence="1">
    <location>
        <begin position="426"/>
        <end position="668"/>
    </location>
</feature>
<feature type="chain" id="PRO_0000040329" description="Nuclear inclusion protein B" evidence="1">
    <location>
        <begin position="669"/>
        <end position="1186"/>
    </location>
</feature>
<feature type="chain" id="PRO_0000040330" description="Capsid protein" evidence="1">
    <location>
        <begin position="1187"/>
        <end position="1518"/>
    </location>
</feature>
<feature type="domain" description="Peptidase C4" evidence="8">
    <location>
        <begin position="426"/>
        <end position="644"/>
    </location>
</feature>
<feature type="domain" description="RdRp catalytic" evidence="7">
    <location>
        <begin position="910"/>
        <end position="1034"/>
    </location>
</feature>
<feature type="region of interest" description="Disordered" evidence="9">
    <location>
        <begin position="1239"/>
        <end position="1272"/>
    </location>
</feature>
<feature type="short sequence motif" description="Nuclear localization signal" evidence="6">
    <location>
        <begin position="273"/>
        <end position="280"/>
    </location>
</feature>
<feature type="compositionally biased region" description="Low complexity" evidence="9">
    <location>
        <begin position="1239"/>
        <end position="1258"/>
    </location>
</feature>
<feature type="active site" description="For nuclear inclusion protein A activity" evidence="8">
    <location>
        <position position="471"/>
    </location>
</feature>
<feature type="active site" description="For nuclear inclusion protein A activity" evidence="8">
    <location>
        <position position="506"/>
    </location>
</feature>
<feature type="active site" description="For nuclear inclusion protein A activity" evidence="8">
    <location>
        <position position="576"/>
    </location>
</feature>
<feature type="site" description="Cleavage; by NIa-pro" evidence="1">
    <location>
        <begin position="179"/>
        <end position="180"/>
    </location>
</feature>
<feature type="site" description="Cleavage; by NIa-pro" evidence="1">
    <location>
        <begin position="232"/>
        <end position="233"/>
    </location>
</feature>
<feature type="site" description="Cleavage; by NIa-pro" evidence="1">
    <location>
        <begin position="425"/>
        <end position="426"/>
    </location>
</feature>
<feature type="site" description="Cleavage; by NIa-pro" evidence="1">
    <location>
        <begin position="668"/>
        <end position="669"/>
    </location>
</feature>
<feature type="site" description="Cleavage; by NIa-pro" evidence="1">
    <location>
        <begin position="1186"/>
        <end position="1187"/>
    </location>
</feature>
<feature type="modified residue" description="O-(5'-phospho-RNA)-tyrosine" evidence="3">
    <location>
        <position position="295"/>
    </location>
</feature>
<feature type="non-terminal residue">
    <location>
        <position position="1"/>
    </location>
</feature>
<organism>
    <name type="scientific">Plum pox potyvirus (strain El amar)</name>
    <name type="common">PPV</name>
    <dbReference type="NCBI Taxonomy" id="31738"/>
    <lineage>
        <taxon>Viruses</taxon>
        <taxon>Riboviria</taxon>
        <taxon>Orthornavirae</taxon>
        <taxon>Pisuviricota</taxon>
        <taxon>Stelpaviricetes</taxon>
        <taxon>Patatavirales</taxon>
        <taxon>Potyviridae</taxon>
        <taxon>Potyvirus</taxon>
        <taxon>Potyvirus plumpoxi</taxon>
        <taxon>Plum pox virus</taxon>
    </lineage>
</organism>
<accession>Q01681</accession>
<keyword id="KW-0167">Capsid protein</keyword>
<keyword id="KW-0191">Covalent protein-RNA linkage</keyword>
<keyword id="KW-1048">Host nucleus</keyword>
<keyword id="KW-0945">Host-virus interaction</keyword>
<keyword id="KW-0378">Hydrolase</keyword>
<keyword id="KW-0547">Nucleotide-binding</keyword>
<keyword id="KW-0548">Nucleotidyltransferase</keyword>
<keyword id="KW-0597">Phosphoprotein</keyword>
<keyword id="KW-0645">Protease</keyword>
<keyword id="KW-0696">RNA-directed RNA polymerase</keyword>
<keyword id="KW-0788">Thiol protease</keyword>
<keyword id="KW-0808">Transferase</keyword>
<keyword id="KW-0693">Viral RNA replication</keyword>
<keyword id="KW-0946">Virion</keyword>
<name>POLG_PPVEA</name>
<dbReference type="EC" id="3.6.4.-"/>
<dbReference type="EC" id="3.4.22.44"/>
<dbReference type="EC" id="2.7.7.48"/>
<dbReference type="EMBL" id="X56258">
    <property type="protein sequence ID" value="CAA39698.1"/>
    <property type="molecule type" value="mRNA"/>
</dbReference>
<dbReference type="PIR" id="PQ0221">
    <property type="entry name" value="PQ0221"/>
</dbReference>
<dbReference type="MEROPS" id="C04.001"/>
<dbReference type="GO" id="GO:0042025">
    <property type="term" value="C:host cell nucleus"/>
    <property type="evidence" value="ECO:0007669"/>
    <property type="project" value="UniProtKB-SubCell"/>
</dbReference>
<dbReference type="GO" id="GO:0019028">
    <property type="term" value="C:viral capsid"/>
    <property type="evidence" value="ECO:0007669"/>
    <property type="project" value="UniProtKB-KW"/>
</dbReference>
<dbReference type="GO" id="GO:0008234">
    <property type="term" value="F:cysteine-type peptidase activity"/>
    <property type="evidence" value="ECO:0007669"/>
    <property type="project" value="UniProtKB-KW"/>
</dbReference>
<dbReference type="GO" id="GO:0016818">
    <property type="term" value="F:hydrolase activity, acting on acid anhydrides, in phosphorus-containing anhydrides"/>
    <property type="evidence" value="ECO:0007669"/>
    <property type="project" value="InterPro"/>
</dbReference>
<dbReference type="GO" id="GO:0000166">
    <property type="term" value="F:nucleotide binding"/>
    <property type="evidence" value="ECO:0007669"/>
    <property type="project" value="UniProtKB-KW"/>
</dbReference>
<dbReference type="GO" id="GO:0003723">
    <property type="term" value="F:RNA binding"/>
    <property type="evidence" value="ECO:0007669"/>
    <property type="project" value="InterPro"/>
</dbReference>
<dbReference type="GO" id="GO:0003968">
    <property type="term" value="F:RNA-directed RNA polymerase activity"/>
    <property type="evidence" value="ECO:0007669"/>
    <property type="project" value="UniProtKB-KW"/>
</dbReference>
<dbReference type="GO" id="GO:0005198">
    <property type="term" value="F:structural molecule activity"/>
    <property type="evidence" value="ECO:0007669"/>
    <property type="project" value="InterPro"/>
</dbReference>
<dbReference type="GO" id="GO:0006351">
    <property type="term" value="P:DNA-templated transcription"/>
    <property type="evidence" value="ECO:0007669"/>
    <property type="project" value="InterPro"/>
</dbReference>
<dbReference type="GO" id="GO:0006508">
    <property type="term" value="P:proteolysis"/>
    <property type="evidence" value="ECO:0007669"/>
    <property type="project" value="UniProtKB-KW"/>
</dbReference>
<dbReference type="GO" id="GO:0039694">
    <property type="term" value="P:viral RNA genome replication"/>
    <property type="evidence" value="ECO:0007669"/>
    <property type="project" value="InterPro"/>
</dbReference>
<dbReference type="CDD" id="cd23175">
    <property type="entry name" value="ps-ssRNAv_Potyviridae_RdRp"/>
    <property type="match status" value="1"/>
</dbReference>
<dbReference type="Gene3D" id="3.30.70.270">
    <property type="match status" value="1"/>
</dbReference>
<dbReference type="Gene3D" id="2.40.10.10">
    <property type="entry name" value="Trypsin-like serine proteases"/>
    <property type="match status" value="2"/>
</dbReference>
<dbReference type="InterPro" id="IPR043502">
    <property type="entry name" value="DNA/RNA_pol_sf"/>
</dbReference>
<dbReference type="InterPro" id="IPR009003">
    <property type="entry name" value="Peptidase_S1_PA"/>
</dbReference>
<dbReference type="InterPro" id="IPR043504">
    <property type="entry name" value="Peptidase_S1_PA_chymotrypsin"/>
</dbReference>
<dbReference type="InterPro" id="IPR001592">
    <property type="entry name" value="Poty_coat"/>
</dbReference>
<dbReference type="InterPro" id="IPR001730">
    <property type="entry name" value="Potyv_NIa-pro_dom"/>
</dbReference>
<dbReference type="InterPro" id="IPR013648">
    <property type="entry name" value="PP_Potyviridae"/>
</dbReference>
<dbReference type="InterPro" id="IPR043128">
    <property type="entry name" value="Rev_trsase/Diguanyl_cyclase"/>
</dbReference>
<dbReference type="InterPro" id="IPR001205">
    <property type="entry name" value="RNA-dir_pol_C"/>
</dbReference>
<dbReference type="InterPro" id="IPR007094">
    <property type="entry name" value="RNA-dir_pol_PSvirus"/>
</dbReference>
<dbReference type="Pfam" id="PF00863">
    <property type="entry name" value="Peptidase_C4"/>
    <property type="match status" value="1"/>
</dbReference>
<dbReference type="Pfam" id="PF00767">
    <property type="entry name" value="Poty_coat"/>
    <property type="match status" value="1"/>
</dbReference>
<dbReference type="Pfam" id="PF08440">
    <property type="entry name" value="Poty_PP"/>
    <property type="match status" value="1"/>
</dbReference>
<dbReference type="Pfam" id="PF00680">
    <property type="entry name" value="RdRP_1"/>
    <property type="match status" value="1"/>
</dbReference>
<dbReference type="PRINTS" id="PR00966">
    <property type="entry name" value="NIAPOTYPTASE"/>
</dbReference>
<dbReference type="SUPFAM" id="SSF56672">
    <property type="entry name" value="DNA/RNA polymerases"/>
    <property type="match status" value="1"/>
</dbReference>
<dbReference type="SUPFAM" id="SSF50494">
    <property type="entry name" value="Trypsin-like serine proteases"/>
    <property type="match status" value="1"/>
</dbReference>
<dbReference type="PROSITE" id="PS51436">
    <property type="entry name" value="POTYVIRUS_NIA_PRO"/>
    <property type="match status" value="1"/>
</dbReference>
<dbReference type="PROSITE" id="PS50507">
    <property type="entry name" value="RDRP_SSRNA_POS"/>
    <property type="match status" value="1"/>
</dbReference>
<protein>
    <recommendedName>
        <fullName>Genome polyprotein</fullName>
    </recommendedName>
    <component>
        <recommendedName>
            <fullName>Cytoplasmic inclusion protein</fullName>
            <shortName>CI</shortName>
            <ecNumber>3.6.4.-</ecNumber>
        </recommendedName>
    </component>
    <component>
        <recommendedName>
            <fullName>6 kDa protein 2</fullName>
            <shortName>6K2</shortName>
        </recommendedName>
    </component>
    <component>
        <recommendedName>
            <fullName>Viral genome-linked protein</fullName>
        </recommendedName>
        <alternativeName>
            <fullName>VPg</fullName>
        </alternativeName>
    </component>
    <component>
        <recommendedName>
            <fullName>Nuclear inclusion protein A</fullName>
            <shortName>NI-A</shortName>
            <shortName>NIA</shortName>
            <ecNumber>3.4.22.44</ecNumber>
        </recommendedName>
        <alternativeName>
            <fullName>49 kDa proteinase</fullName>
            <shortName>49 kDa-Pro</shortName>
        </alternativeName>
    </component>
    <component>
        <recommendedName>
            <fullName>Nuclear inclusion protein B</fullName>
            <shortName>NI-B</shortName>
            <shortName>NIB</shortName>
        </recommendedName>
        <alternativeName>
            <fullName>RNA-directed RNA polymerase</fullName>
            <ecNumber>2.7.7.48</ecNumber>
        </alternativeName>
    </component>
    <component>
        <recommendedName>
            <fullName>Capsid protein</fullName>
            <shortName>CP</shortName>
        </recommendedName>
        <alternativeName>
            <fullName>Coat protein</fullName>
        </alternativeName>
    </component>
</protein>
<reference key="1">
    <citation type="journal article" date="1991" name="J. Gen. Virol.">
        <title>Nucleotide sequence of the 3'-terminal region of the RNA of the El Amar strain of plum pox potyvirus.</title>
        <authorList>
            <person name="Wetzel T."/>
            <person name="Candresse T."/>
            <person name="Ravelonandro M."/>
            <person name="Delbos R.P."/>
            <person name="Mazyad H."/>
            <person name="Aboul-Ata A.E."/>
            <person name="Dunez J."/>
        </authorList>
    </citation>
    <scope>NUCLEOTIDE SEQUENCE [MRNA]</scope>
</reference>
<reference key="2">
    <citation type="journal article" date="2001" name="Virus Res.">
        <title>Potyvirus proteins: a wealth of functions.</title>
        <authorList>
            <person name="Urcuqui-Inchima S."/>
            <person name="Haenni A.L."/>
            <person name="Bernardi F."/>
        </authorList>
    </citation>
    <scope>REVIEW</scope>
</reference>
<proteinExistence type="evidence at transcript level"/>
<comment type="function">
    <molecule>6 kDa protein 2</molecule>
    <text evidence="2">Indispensable for virus replication.</text>
</comment>
<comment type="function">
    <molecule>Viral genome-linked protein</molecule>
    <text evidence="4">Mediates the cap-independent, EIF4E-dependent translation of viral genomic RNAs (By similarity). Binds to the cap-binding site of host EIF4E and thus interferes with the host EIF4E-dependent mRNA export and translation (By similarity). VPg-RNA directly binds EIF4E and is a template for transcription (By similarity). Also forms trimeric complexes with EIF4E-EIF4G, which are templates for translation (By similarity).</text>
</comment>
<comment type="function">
    <molecule>Nuclear inclusion protein A</molecule>
    <text evidence="2">Has RNA-binding and proteolytic activities.</text>
</comment>
<comment type="function">
    <molecule>Nuclear inclusion protein B</molecule>
    <text>An RNA-dependent RNA polymerase that plays an essential role in the virus replication.</text>
</comment>
<comment type="function">
    <molecule>Capsid protein</molecule>
    <text evidence="2">Involved in aphid transmission, cell-to-cell and systemis movement, encapsidation of the viral RNA and in the regulation of viral RNA amplification.</text>
</comment>
<comment type="catalytic activity">
    <reaction evidence="2">
        <text>Hydrolyzes glutaminyl bonds, and activity is further restricted by preferences for the amino acids in P6 - P1' that vary with the species of potyvirus, e.g. Glu-Xaa-Xaa-Tyr-Xaa-Gln-|-(Ser or Gly) for the enzyme from tobacco etch virus. The natural substrate is the viral polyprotein, but other proteins and oligopeptides containing the appropriate consensus sequence are also cleaved.</text>
        <dbReference type="EC" id="3.4.22.44"/>
    </reaction>
</comment>
<comment type="catalytic activity">
    <reaction evidence="7">
        <text>RNA(n) + a ribonucleoside 5'-triphosphate = RNA(n+1) + diphosphate</text>
        <dbReference type="Rhea" id="RHEA:21248"/>
        <dbReference type="Rhea" id="RHEA-COMP:14527"/>
        <dbReference type="Rhea" id="RHEA-COMP:17342"/>
        <dbReference type="ChEBI" id="CHEBI:33019"/>
        <dbReference type="ChEBI" id="CHEBI:61557"/>
        <dbReference type="ChEBI" id="CHEBI:140395"/>
        <dbReference type="EC" id="2.7.7.48"/>
    </reaction>
</comment>
<comment type="subunit">
    <molecule>Viral genome-linked protein</molecule>
    <text evidence="4">Interacts with host eIF4E protein (via cap-binding region); this interaction mediates the translation of the VPg-viral RNA conjugates (By similarity). Part of a complex that comprises VPg, RNA, host EIF4E and EIF4G; this interaction mediates the translation of the VPg-viral RNA conjugates (By similarity).</text>
</comment>
<comment type="subcellular location">
    <molecule>Viral genome-linked protein</molecule>
    <subcellularLocation>
        <location evidence="5">Host nucleus</location>
    </subcellularLocation>
    <text evidence="5">Binds to host plant eIF4E proteins in the host nucleus.</text>
</comment>
<comment type="subcellular location">
    <molecule>Capsid protein</molecule>
    <subcellularLocation>
        <location evidence="10">Virion</location>
    </subcellularLocation>
</comment>
<comment type="PTM">
    <molecule>Viral genome-linked protein</molecule>
    <text evidence="3">VPg is uridylylated by the polymerase and is covalently attached to the 5'-end of the genomic RNA. This uridylylated form acts as a nucleotide-peptide primer for the polymerase (By similarity).</text>
</comment>
<comment type="PTM">
    <molecule>Genome polyprotein</molecule>
    <text evidence="1">Genome polyprotein of potyviruses undergoes post-translational proteolytic processing by the main proteinase NIa-pro resulting in the production of at least ten individual proteins. The P1 proteinase and the HC-pro cleave only their respective C-termini autocatalytically. 6K1 is essential for proper proteolytic separation of P3 from CI (By similarity).</text>
</comment>
<comment type="similarity">
    <text evidence="10">Belongs to the potyviridae genome polyprotein family.</text>
</comment>